<name>NAAA_MOUSE</name>
<dbReference type="EC" id="3.5.1.60" evidence="3"/>
<dbReference type="EC" id="3.5.1.23" evidence="3"/>
<dbReference type="EMBL" id="AB162194">
    <property type="protein sequence ID" value="BAD88530.1"/>
    <property type="molecule type" value="mRNA"/>
</dbReference>
<dbReference type="EMBL" id="AK008776">
    <property type="protein sequence ID" value="BAB25888.1"/>
    <property type="molecule type" value="mRNA"/>
</dbReference>
<dbReference type="EMBL" id="AK014438">
    <property type="protein sequence ID" value="BAB29350.2"/>
    <property type="status" value="ALT_SEQ"/>
    <property type="molecule type" value="mRNA"/>
</dbReference>
<dbReference type="EMBL" id="BC004572">
    <property type="protein sequence ID" value="AAH04572.1"/>
    <property type="molecule type" value="mRNA"/>
</dbReference>
<dbReference type="CCDS" id="CCDS19428.1"/>
<dbReference type="RefSeq" id="NP_001157159.1">
    <property type="nucleotide sequence ID" value="NM_001163687.1"/>
</dbReference>
<dbReference type="RefSeq" id="NP_080248.2">
    <property type="nucleotide sequence ID" value="NM_025972.4"/>
</dbReference>
<dbReference type="PDB" id="6DXY">
    <property type="method" value="X-ray"/>
    <property type="resolution" value="1.85 A"/>
    <property type="chains" value="A/C=31-126, B/D=127-358"/>
</dbReference>
<dbReference type="PDBsum" id="6DXY"/>
<dbReference type="SMR" id="Q9D7V9"/>
<dbReference type="FunCoup" id="Q9D7V9">
    <property type="interactions" value="415"/>
</dbReference>
<dbReference type="IntAct" id="Q9D7V9">
    <property type="interactions" value="1"/>
</dbReference>
<dbReference type="STRING" id="10090.ENSMUSP00000108726"/>
<dbReference type="MEROPS" id="C89.002"/>
<dbReference type="GlyCosmos" id="Q9D7V9">
    <property type="glycosylation" value="4 sites, No reported glycans"/>
</dbReference>
<dbReference type="GlyGen" id="Q9D7V9">
    <property type="glycosylation" value="4 sites"/>
</dbReference>
<dbReference type="iPTMnet" id="Q9D7V9"/>
<dbReference type="PhosphoSitePlus" id="Q9D7V9"/>
<dbReference type="SwissPalm" id="Q9D7V9"/>
<dbReference type="PaxDb" id="10090-ENSMUSP00000108726"/>
<dbReference type="ProteomicsDB" id="287556"/>
<dbReference type="Pumba" id="Q9D7V9"/>
<dbReference type="Antibodypedia" id="24722">
    <property type="antibodies" value="192 antibodies from 25 providers"/>
</dbReference>
<dbReference type="DNASU" id="67111"/>
<dbReference type="Ensembl" id="ENSMUST00000113102.10">
    <property type="protein sequence ID" value="ENSMUSP00000108726.4"/>
    <property type="gene ID" value="ENSMUSG00000029413.15"/>
</dbReference>
<dbReference type="GeneID" id="67111"/>
<dbReference type="KEGG" id="mmu:67111"/>
<dbReference type="UCSC" id="uc008ycq.2">
    <property type="organism name" value="mouse"/>
</dbReference>
<dbReference type="AGR" id="MGI:1914361"/>
<dbReference type="CTD" id="27163"/>
<dbReference type="MGI" id="MGI:1914361">
    <property type="gene designation" value="Naaa"/>
</dbReference>
<dbReference type="VEuPathDB" id="HostDB:ENSMUSG00000029413"/>
<dbReference type="eggNOG" id="ENOG502QT7H">
    <property type="taxonomic scope" value="Eukaryota"/>
</dbReference>
<dbReference type="GeneTree" id="ENSGT00530000063548"/>
<dbReference type="InParanoid" id="Q9D7V9"/>
<dbReference type="OMA" id="GQDHINM"/>
<dbReference type="OrthoDB" id="5273684at2759"/>
<dbReference type="PhylomeDB" id="Q9D7V9"/>
<dbReference type="TreeFam" id="TF313219"/>
<dbReference type="BRENDA" id="3.5.1.4">
    <property type="organism ID" value="3474"/>
</dbReference>
<dbReference type="BRENDA" id="3.5.1.60">
    <property type="organism ID" value="3474"/>
</dbReference>
<dbReference type="Reactome" id="R-MMU-112310">
    <property type="pathway name" value="Neurotransmitter release cycle"/>
</dbReference>
<dbReference type="UniPathway" id="UPA00199"/>
<dbReference type="BioGRID-ORCS" id="67111">
    <property type="hits" value="2 hits in 80 CRISPR screens"/>
</dbReference>
<dbReference type="ChiTaRS" id="Naaa">
    <property type="organism name" value="mouse"/>
</dbReference>
<dbReference type="PRO" id="PR:Q9D7V9"/>
<dbReference type="Proteomes" id="UP000000589">
    <property type="component" value="Chromosome 5"/>
</dbReference>
<dbReference type="RNAct" id="Q9D7V9">
    <property type="molecule type" value="protein"/>
</dbReference>
<dbReference type="Bgee" id="ENSMUSG00000029413">
    <property type="expression patterns" value="Expressed in ventricular system choroidal fissure and 203 other cell types or tissues"/>
</dbReference>
<dbReference type="ExpressionAtlas" id="Q9D7V9">
    <property type="expression patterns" value="baseline and differential"/>
</dbReference>
<dbReference type="GO" id="GO:0005737">
    <property type="term" value="C:cytoplasm"/>
    <property type="evidence" value="ECO:0000266"/>
    <property type="project" value="MGI"/>
</dbReference>
<dbReference type="GO" id="GO:0005764">
    <property type="term" value="C:lysosome"/>
    <property type="evidence" value="ECO:0000314"/>
    <property type="project" value="MGI"/>
</dbReference>
<dbReference type="GO" id="GO:0016020">
    <property type="term" value="C:membrane"/>
    <property type="evidence" value="ECO:0000250"/>
    <property type="project" value="UniProtKB"/>
</dbReference>
<dbReference type="GO" id="GO:0140297">
    <property type="term" value="F:DNA-binding transcription factor binding"/>
    <property type="evidence" value="ECO:0007669"/>
    <property type="project" value="Ensembl"/>
</dbReference>
<dbReference type="GO" id="GO:0017064">
    <property type="term" value="F:fatty acid amide hydrolase activity"/>
    <property type="evidence" value="ECO:0000250"/>
    <property type="project" value="UniProtKB"/>
</dbReference>
<dbReference type="GO" id="GO:0016810">
    <property type="term" value="F:hydrolase activity, acting on carbon-nitrogen (but not peptide) bonds"/>
    <property type="evidence" value="ECO:0000266"/>
    <property type="project" value="MGI"/>
</dbReference>
<dbReference type="GO" id="GO:0047412">
    <property type="term" value="F:N-(long-chain-acyl)ethanolamine deacylase activity"/>
    <property type="evidence" value="ECO:0000250"/>
    <property type="project" value="UniProtKB"/>
</dbReference>
<dbReference type="GO" id="GO:0017040">
    <property type="term" value="F:N-acylsphingosine amidohydrolase activity"/>
    <property type="evidence" value="ECO:0000250"/>
    <property type="project" value="UniProtKB"/>
</dbReference>
<dbReference type="GO" id="GO:0006631">
    <property type="term" value="P:fatty acid metabolic process"/>
    <property type="evidence" value="ECO:0000250"/>
    <property type="project" value="UniProtKB"/>
</dbReference>
<dbReference type="GO" id="GO:0016042">
    <property type="term" value="P:lipid catabolic process"/>
    <property type="evidence" value="ECO:0007669"/>
    <property type="project" value="UniProtKB-KW"/>
</dbReference>
<dbReference type="GO" id="GO:0070291">
    <property type="term" value="P:N-acylethanolamine metabolic process"/>
    <property type="evidence" value="ECO:0000250"/>
    <property type="project" value="UniProtKB"/>
</dbReference>
<dbReference type="GO" id="GO:0070292">
    <property type="term" value="P:N-acylphosphatidylethanolamine metabolic process"/>
    <property type="evidence" value="ECO:0000250"/>
    <property type="project" value="UniProtKB"/>
</dbReference>
<dbReference type="GO" id="GO:0006670">
    <property type="term" value="P:sphingosine metabolic process"/>
    <property type="evidence" value="ECO:0000250"/>
    <property type="project" value="UniProtKB"/>
</dbReference>
<dbReference type="CDD" id="cd01903">
    <property type="entry name" value="Ntn_AC_NAAA"/>
    <property type="match status" value="1"/>
</dbReference>
<dbReference type="FunFam" id="3.60.60.10:FF:000003">
    <property type="entry name" value="N-acylethanolamine-hydrolyzing acid amidase"/>
    <property type="match status" value="1"/>
</dbReference>
<dbReference type="Gene3D" id="3.60.60.10">
    <property type="entry name" value="Penicillin V Acylase, Chain A"/>
    <property type="match status" value="1"/>
</dbReference>
<dbReference type="InterPro" id="IPR016699">
    <property type="entry name" value="Acid_ceramidase-like"/>
</dbReference>
<dbReference type="InterPro" id="IPR029130">
    <property type="entry name" value="Acid_ceramidase_N"/>
</dbReference>
<dbReference type="InterPro" id="IPR029132">
    <property type="entry name" value="CBAH/NAAA_C"/>
</dbReference>
<dbReference type="PANTHER" id="PTHR28583">
    <property type="entry name" value="ACID AMIDASE"/>
    <property type="match status" value="1"/>
</dbReference>
<dbReference type="PANTHER" id="PTHR28583:SF4">
    <property type="entry name" value="N-ACYLETHANOLAMINE-HYDROLYZING ACID AMIDASE"/>
    <property type="match status" value="1"/>
</dbReference>
<dbReference type="Pfam" id="PF02275">
    <property type="entry name" value="CBAH"/>
    <property type="match status" value="1"/>
</dbReference>
<dbReference type="Pfam" id="PF15508">
    <property type="entry name" value="NAAA-beta"/>
    <property type="match status" value="1"/>
</dbReference>
<dbReference type="PIRSF" id="PIRSF017632">
    <property type="entry name" value="Acid_ceramidase-like"/>
    <property type="match status" value="1"/>
</dbReference>
<accession>Q9D7V9</accession>
<accession>Q5KTC6</accession>
<accession>Q99KM3</accession>
<accession>Q9D6B4</accession>
<sequence length="362" mass="40075">MGTLATRAACHGAHLALALLLLLSLSGPWLSAVVPGTPPLFNVSLDAAPEQRWLPMLRHYDPDFLRTAVAQVIGDRVPQWVLGMVGEIVSKVESFLPQPFTDEIRSICDSLNLSLADGILVNLAYEASAFCTSIVAQDSQGHIYHGRNLDYPFGKILRKLTANVQFIKNGQIAFTGTTFVGYVGLWTGQSPHKFTISGDERDKGWWWENMIAALSLGHSPISWLIRKTLSESESFEAAVYTLAKTPLIADVYYIVGGTSPKEGVVITRDRGGPADIWPLDPLNGEWFRVETNYDHWKPAPKVDDRRTPAIKALNATGQAHLNLETLFQVLSLFPVYNNYTIYTTVMSAAEPDKYLTMIRNPS</sequence>
<proteinExistence type="evidence at protein level"/>
<comment type="function">
    <text evidence="3">Degrades bioactive fatty acid amides to their corresponding acids, with the following preference: N-palmitoylethanolamine &gt; N-myristoylethanolamine &gt; N-stearoylethanolamine &gt; N-oleoylethanolamine &gt; N-linoleoylethanolamine &gt; N-arachidonoylethanolamine.</text>
</comment>
<comment type="catalytic activity">
    <reaction evidence="2">
        <text>N-hexadecanoylethanolamine + H2O = ethanolamine + hexadecanoate</text>
        <dbReference type="Rhea" id="RHEA:45064"/>
        <dbReference type="ChEBI" id="CHEBI:7896"/>
        <dbReference type="ChEBI" id="CHEBI:15377"/>
        <dbReference type="ChEBI" id="CHEBI:57603"/>
        <dbReference type="ChEBI" id="CHEBI:71464"/>
    </reaction>
    <physiologicalReaction direction="left-to-right" evidence="2">
        <dbReference type="Rhea" id="RHEA:45065"/>
    </physiologicalReaction>
</comment>
<comment type="catalytic activity">
    <reaction evidence="2">
        <text>an N-(long-chain fatty acyl)ethanolamine + H2O = a long-chain fatty acid + ethanolamine</text>
        <dbReference type="Rhea" id="RHEA:17505"/>
        <dbReference type="ChEBI" id="CHEBI:15377"/>
        <dbReference type="ChEBI" id="CHEBI:15897"/>
        <dbReference type="ChEBI" id="CHEBI:57560"/>
        <dbReference type="ChEBI" id="CHEBI:57603"/>
        <dbReference type="EC" id="3.5.1.60"/>
    </reaction>
    <physiologicalReaction direction="left-to-right" evidence="2">
        <dbReference type="Rhea" id="RHEA:17506"/>
    </physiologicalReaction>
</comment>
<comment type="catalytic activity">
    <reaction evidence="2">
        <text>N-dodecanoylethanolamine + H2O = dodecanoate + ethanolamine</text>
        <dbReference type="Rhea" id="RHEA:45456"/>
        <dbReference type="ChEBI" id="CHEBI:15377"/>
        <dbReference type="ChEBI" id="CHEBI:18262"/>
        <dbReference type="ChEBI" id="CHEBI:57603"/>
        <dbReference type="ChEBI" id="CHEBI:85263"/>
    </reaction>
    <physiologicalReaction direction="left-to-right" evidence="2">
        <dbReference type="Rhea" id="RHEA:45457"/>
    </physiologicalReaction>
</comment>
<comment type="catalytic activity">
    <reaction evidence="2">
        <text>N-tetradecanoylethanolamine + H2O = tetradecanoate + ethanolamine</text>
        <dbReference type="Rhea" id="RHEA:45452"/>
        <dbReference type="ChEBI" id="CHEBI:15377"/>
        <dbReference type="ChEBI" id="CHEBI:30807"/>
        <dbReference type="ChEBI" id="CHEBI:57603"/>
        <dbReference type="ChEBI" id="CHEBI:85262"/>
    </reaction>
    <physiologicalReaction direction="left-to-right" evidence="2">
        <dbReference type="Rhea" id="RHEA:45453"/>
    </physiologicalReaction>
</comment>
<comment type="catalytic activity">
    <reaction evidence="2">
        <text>an N-acylsphing-4-enine + H2O = sphing-4-enine + a fatty acid</text>
        <dbReference type="Rhea" id="RHEA:20856"/>
        <dbReference type="ChEBI" id="CHEBI:15377"/>
        <dbReference type="ChEBI" id="CHEBI:28868"/>
        <dbReference type="ChEBI" id="CHEBI:52639"/>
        <dbReference type="ChEBI" id="CHEBI:57756"/>
        <dbReference type="EC" id="3.5.1.23"/>
    </reaction>
    <physiologicalReaction direction="left-to-right" evidence="2">
        <dbReference type="Rhea" id="RHEA:20857"/>
    </physiologicalReaction>
</comment>
<comment type="catalytic activity">
    <reaction evidence="2">
        <text>N-hexadecanoylsphing-4-enine + H2O = sphing-4-enine + hexadecanoate</text>
        <dbReference type="Rhea" id="RHEA:38891"/>
        <dbReference type="ChEBI" id="CHEBI:7896"/>
        <dbReference type="ChEBI" id="CHEBI:15377"/>
        <dbReference type="ChEBI" id="CHEBI:57756"/>
        <dbReference type="ChEBI" id="CHEBI:72959"/>
    </reaction>
    <physiologicalReaction direction="left-to-right" evidence="2">
        <dbReference type="Rhea" id="RHEA:38892"/>
    </physiologicalReaction>
</comment>
<comment type="catalytic activity">
    <reaction evidence="2">
        <text>N-dodecanoylsphing-4-enine + H2O = dodecanoate + sphing-4-enine</text>
        <dbReference type="Rhea" id="RHEA:41291"/>
        <dbReference type="ChEBI" id="CHEBI:15377"/>
        <dbReference type="ChEBI" id="CHEBI:18262"/>
        <dbReference type="ChEBI" id="CHEBI:57756"/>
        <dbReference type="ChEBI" id="CHEBI:72956"/>
    </reaction>
    <physiologicalReaction direction="left-to-right" evidence="2">
        <dbReference type="Rhea" id="RHEA:41292"/>
    </physiologicalReaction>
</comment>
<comment type="pathway">
    <text evidence="2">Lipid metabolism; fatty acid metabolism.</text>
</comment>
<comment type="subunit">
    <text evidence="5">Heterodimer of an alpha and a beta subunit, produced by autocatalytic cleavage.</text>
</comment>
<comment type="subcellular location">
    <subcellularLocation>
        <location evidence="2">Lysosome</location>
    </subcellularLocation>
    <subcellularLocation>
        <location evidence="2">Membrane</location>
        <topology evidence="2">Peripheral membrane protein</topology>
    </subcellularLocation>
</comment>
<comment type="PTM">
    <text evidence="2 5">N-glycosylated (PubMed:30301806). Tunicamycin treatment causes a reduction in specific activity against N-palmitoylethanolamine (By similarity).</text>
</comment>
<comment type="PTM">
    <text evidence="2 5">Autoproteolytic cleavage at pH 4.5 gives rise to the alpha and beta subunit (PubMed:30301806). Cleavage gives rise to a conformation change that activates the enzyme. The same catalytic Cys residue mediates the autoproteolytic cleavage and subsequent hydrolysis of lipid substrates (By similarity).</text>
</comment>
<comment type="similarity">
    <text evidence="7">Belongs to the acid ceramidase family.</text>
</comment>
<comment type="sequence caution" evidence="7">
    <conflict type="miscellaneous discrepancy">
        <sequence resource="EMBL-CDS" id="BAB29350"/>
    </conflict>
    <text>Intron retention.</text>
</comment>
<organism>
    <name type="scientific">Mus musculus</name>
    <name type="common">Mouse</name>
    <dbReference type="NCBI Taxonomy" id="10090"/>
    <lineage>
        <taxon>Eukaryota</taxon>
        <taxon>Metazoa</taxon>
        <taxon>Chordata</taxon>
        <taxon>Craniata</taxon>
        <taxon>Vertebrata</taxon>
        <taxon>Euteleostomi</taxon>
        <taxon>Mammalia</taxon>
        <taxon>Eutheria</taxon>
        <taxon>Euarchontoglires</taxon>
        <taxon>Glires</taxon>
        <taxon>Rodentia</taxon>
        <taxon>Myomorpha</taxon>
        <taxon>Muroidea</taxon>
        <taxon>Muridae</taxon>
        <taxon>Murinae</taxon>
        <taxon>Mus</taxon>
        <taxon>Mus</taxon>
    </lineage>
</organism>
<feature type="signal peptide" evidence="1">
    <location>
        <begin position="1"/>
        <end position="33"/>
    </location>
</feature>
<feature type="chain" id="PRO_0000002319" description="N-acylethanolamine-hydrolyzing acid amidase">
    <location>
        <begin position="34"/>
        <end position="362"/>
    </location>
</feature>
<feature type="chain" id="PRO_0000419652" description="N-acylethanolamine-hydrolyzing acid amidase subunit alpha" evidence="8">
    <location>
        <begin position="34"/>
        <end position="130"/>
    </location>
</feature>
<feature type="chain" id="PRO_0000419653" description="N-acylethanolamine-hydrolyzing acid amidase subunit beta" evidence="8">
    <location>
        <begin position="131"/>
        <end position="362"/>
    </location>
</feature>
<feature type="active site" description="Nucleophile" evidence="8">
    <location>
        <position position="131"/>
    </location>
</feature>
<feature type="site" description="Important for enzyme activity" evidence="2">
    <location>
        <position position="147"/>
    </location>
</feature>
<feature type="site" description="Important for enzyme activity" evidence="2">
    <location>
        <position position="292"/>
    </location>
</feature>
<feature type="glycosylation site" description="N-linked (GlcNAc...) asparagine" evidence="5 10">
    <location>
        <position position="42"/>
    </location>
</feature>
<feature type="glycosylation site" description="N-linked (GlcNAc...) asparagine" evidence="4">
    <location>
        <position position="112"/>
    </location>
</feature>
<feature type="glycosylation site" description="N-linked (GlcNAc...) asparagine" evidence="5 10">
    <location>
        <position position="314"/>
    </location>
</feature>
<feature type="glycosylation site" description="N-linked (GlcNAc...) asparagine" evidence="4">
    <location>
        <position position="338"/>
    </location>
</feature>
<feature type="mutagenesis site" description="Loss of one glycosylation site." evidence="5">
    <original>N</original>
    <variation>S</variation>
    <location>
        <position position="112"/>
    </location>
</feature>
<feature type="mutagenesis site" description="Loss of one glycosylation site." evidence="5">
    <original>N</original>
    <variation>S</variation>
    <location>
        <position position="338"/>
    </location>
</feature>
<feature type="sequence conflict" description="In Ref. 2; BAB25888." evidence="7" ref="2">
    <original>A</original>
    <variation>D</variation>
    <location>
        <position position="5"/>
    </location>
</feature>
<feature type="sequence conflict" description="In Ref. 3; AAH04572." evidence="7" ref="3">
    <original>A</original>
    <variation>V</variation>
    <location>
        <position position="47"/>
    </location>
</feature>
<feature type="sequence conflict" description="In Ref. 3; AAH04572." evidence="7" ref="3">
    <original>H</original>
    <variation>R</variation>
    <location>
        <position position="142"/>
    </location>
</feature>
<feature type="sequence conflict" description="In Ref. 3; AAH04572." evidence="7" ref="3">
    <original>N</original>
    <variation>D</variation>
    <location>
        <position position="163"/>
    </location>
</feature>
<feature type="strand" evidence="11">
    <location>
        <begin position="40"/>
        <end position="44"/>
    </location>
</feature>
<feature type="turn" evidence="11">
    <location>
        <begin position="49"/>
        <end position="53"/>
    </location>
</feature>
<feature type="helix" evidence="11">
    <location>
        <begin position="54"/>
        <end position="57"/>
    </location>
</feature>
<feature type="helix" evidence="11">
    <location>
        <begin position="62"/>
        <end position="76"/>
    </location>
</feature>
<feature type="helix" evidence="11">
    <location>
        <begin position="79"/>
        <end position="83"/>
    </location>
</feature>
<feature type="helix" evidence="11">
    <location>
        <begin position="85"/>
        <end position="95"/>
    </location>
</feature>
<feature type="helix" evidence="11">
    <location>
        <begin position="98"/>
        <end position="111"/>
    </location>
</feature>
<feature type="helix" evidence="11">
    <location>
        <begin position="115"/>
        <end position="123"/>
    </location>
</feature>
<feature type="strand" evidence="11">
    <location>
        <begin position="132"/>
        <end position="137"/>
    </location>
</feature>
<feature type="strand" evidence="11">
    <location>
        <begin position="143"/>
        <end position="150"/>
    </location>
</feature>
<feature type="helix" evidence="11">
    <location>
        <begin position="157"/>
        <end position="160"/>
    </location>
</feature>
<feature type="strand" evidence="11">
    <location>
        <begin position="161"/>
        <end position="168"/>
    </location>
</feature>
<feature type="strand" evidence="11">
    <location>
        <begin position="171"/>
        <end position="179"/>
    </location>
</feature>
<feature type="strand" evidence="11">
    <location>
        <begin position="186"/>
        <end position="190"/>
    </location>
</feature>
<feature type="turn" evidence="11">
    <location>
        <begin position="191"/>
        <end position="193"/>
    </location>
</feature>
<feature type="strand" evidence="11">
    <location>
        <begin position="194"/>
        <end position="200"/>
    </location>
</feature>
<feature type="helix" evidence="11">
    <location>
        <begin position="206"/>
        <end position="214"/>
    </location>
</feature>
<feature type="turn" evidence="11">
    <location>
        <begin position="215"/>
        <end position="217"/>
    </location>
</feature>
<feature type="helix" evidence="11">
    <location>
        <begin position="221"/>
        <end position="231"/>
    </location>
</feature>
<feature type="helix" evidence="11">
    <location>
        <begin position="235"/>
        <end position="244"/>
    </location>
</feature>
<feature type="strand" evidence="11">
    <location>
        <begin position="247"/>
        <end position="249"/>
    </location>
</feature>
<feature type="strand" evidence="11">
    <location>
        <begin position="251"/>
        <end position="256"/>
    </location>
</feature>
<feature type="strand" evidence="11">
    <location>
        <begin position="263"/>
        <end position="268"/>
    </location>
</feature>
<feature type="strand" evidence="11">
    <location>
        <begin position="270"/>
        <end position="278"/>
    </location>
</feature>
<feature type="helix" evidence="11">
    <location>
        <begin position="281"/>
        <end position="283"/>
    </location>
</feature>
<feature type="strand" evidence="11">
    <location>
        <begin position="287"/>
        <end position="293"/>
    </location>
</feature>
<feature type="helix" evidence="11">
    <location>
        <begin position="301"/>
        <end position="303"/>
    </location>
</feature>
<feature type="helix" evidence="11">
    <location>
        <begin position="306"/>
        <end position="316"/>
    </location>
</feature>
<feature type="helix" evidence="11">
    <location>
        <begin position="318"/>
        <end position="320"/>
    </location>
</feature>
<feature type="helix" evidence="11">
    <location>
        <begin position="323"/>
        <end position="329"/>
    </location>
</feature>
<feature type="turn" evidence="11">
    <location>
        <begin position="333"/>
        <end position="335"/>
    </location>
</feature>
<feature type="strand" evidence="11">
    <location>
        <begin position="340"/>
        <end position="346"/>
    </location>
</feature>
<feature type="helix" evidence="11">
    <location>
        <begin position="351"/>
        <end position="353"/>
    </location>
</feature>
<feature type="strand" evidence="11">
    <location>
        <begin position="355"/>
        <end position="358"/>
    </location>
</feature>
<evidence type="ECO:0000250" key="1"/>
<evidence type="ECO:0000250" key="2">
    <source>
        <dbReference type="UniProtKB" id="Q02083"/>
    </source>
</evidence>
<evidence type="ECO:0000250" key="3">
    <source>
        <dbReference type="UniProtKB" id="Q5KTC7"/>
    </source>
</evidence>
<evidence type="ECO:0000255" key="4"/>
<evidence type="ECO:0000269" key="5">
    <source>
    </source>
</evidence>
<evidence type="ECO:0000303" key="6">
    <source>
    </source>
</evidence>
<evidence type="ECO:0000305" key="7"/>
<evidence type="ECO:0000305" key="8">
    <source>
    </source>
</evidence>
<evidence type="ECO:0000312" key="9">
    <source>
        <dbReference type="MGI" id="MGI:1914361"/>
    </source>
</evidence>
<evidence type="ECO:0007744" key="10">
    <source>
        <dbReference type="PDB" id="6DXY"/>
    </source>
</evidence>
<evidence type="ECO:0007829" key="11">
    <source>
        <dbReference type="PDB" id="6DXY"/>
    </source>
</evidence>
<gene>
    <name evidence="6 9" type="primary">Naaa</name>
    <name type="synonym">Asahl</name>
</gene>
<keyword id="KW-0002">3D-structure</keyword>
<keyword id="KW-0068">Autocatalytic cleavage</keyword>
<keyword id="KW-0276">Fatty acid metabolism</keyword>
<keyword id="KW-0325">Glycoprotein</keyword>
<keyword id="KW-0378">Hydrolase</keyword>
<keyword id="KW-0442">Lipid degradation</keyword>
<keyword id="KW-0443">Lipid metabolism</keyword>
<keyword id="KW-0458">Lysosome</keyword>
<keyword id="KW-0472">Membrane</keyword>
<keyword id="KW-1185">Reference proteome</keyword>
<keyword id="KW-0732">Signal</keyword>
<keyword id="KW-0865">Zymogen</keyword>
<protein>
    <recommendedName>
        <fullName evidence="7">N-acylethanolamine-hydrolyzing acid amidase</fullName>
        <ecNumber evidence="3">3.5.1.60</ecNumber>
    </recommendedName>
    <alternativeName>
        <fullName evidence="3">Acylsphingosine deacylase NAAA</fullName>
        <ecNumber evidence="3">3.5.1.23</ecNumber>
    </alternativeName>
    <alternativeName>
        <fullName>N-acylsphingosine amidohydrolase-like</fullName>
        <shortName>ASAH-like protein</shortName>
    </alternativeName>
    <component>
        <recommendedName>
            <fullName>N-acylethanolamine-hydrolyzing acid amidase subunit alpha</fullName>
        </recommendedName>
    </component>
    <component>
        <recommendedName>
            <fullName>N-acylethanolamine-hydrolyzing acid amidase subunit beta</fullName>
        </recommendedName>
    </component>
</protein>
<reference key="1">
    <citation type="journal article" date="2005" name="J. Biol. Chem.">
        <title>Molecular characterization of N-acylethanolamine-hydrolyzing acid amidase, a novel member of the choloylglycine hydrolase family with structural and functional similarity to acid ceramidase.</title>
        <authorList>
            <person name="Tsuboi K."/>
            <person name="Sun Y.-X."/>
            <person name="Okamoto Y."/>
            <person name="Araki N."/>
            <person name="Tonai T."/>
            <person name="Ueda N."/>
        </authorList>
    </citation>
    <scope>NUCLEOTIDE SEQUENCE [MRNA]</scope>
    <source>
        <strain>C57BL/6J</strain>
        <tissue>Lung</tissue>
    </source>
</reference>
<reference key="2">
    <citation type="journal article" date="2005" name="Science">
        <title>The transcriptional landscape of the mammalian genome.</title>
        <authorList>
            <person name="Carninci P."/>
            <person name="Kasukawa T."/>
            <person name="Katayama S."/>
            <person name="Gough J."/>
            <person name="Frith M.C."/>
            <person name="Maeda N."/>
            <person name="Oyama R."/>
            <person name="Ravasi T."/>
            <person name="Lenhard B."/>
            <person name="Wells C."/>
            <person name="Kodzius R."/>
            <person name="Shimokawa K."/>
            <person name="Bajic V.B."/>
            <person name="Brenner S.E."/>
            <person name="Batalov S."/>
            <person name="Forrest A.R."/>
            <person name="Zavolan M."/>
            <person name="Davis M.J."/>
            <person name="Wilming L.G."/>
            <person name="Aidinis V."/>
            <person name="Allen J.E."/>
            <person name="Ambesi-Impiombato A."/>
            <person name="Apweiler R."/>
            <person name="Aturaliya R.N."/>
            <person name="Bailey T.L."/>
            <person name="Bansal M."/>
            <person name="Baxter L."/>
            <person name="Beisel K.W."/>
            <person name="Bersano T."/>
            <person name="Bono H."/>
            <person name="Chalk A.M."/>
            <person name="Chiu K.P."/>
            <person name="Choudhary V."/>
            <person name="Christoffels A."/>
            <person name="Clutterbuck D.R."/>
            <person name="Crowe M.L."/>
            <person name="Dalla E."/>
            <person name="Dalrymple B.P."/>
            <person name="de Bono B."/>
            <person name="Della Gatta G."/>
            <person name="di Bernardo D."/>
            <person name="Down T."/>
            <person name="Engstrom P."/>
            <person name="Fagiolini M."/>
            <person name="Faulkner G."/>
            <person name="Fletcher C.F."/>
            <person name="Fukushima T."/>
            <person name="Furuno M."/>
            <person name="Futaki S."/>
            <person name="Gariboldi M."/>
            <person name="Georgii-Hemming P."/>
            <person name="Gingeras T.R."/>
            <person name="Gojobori T."/>
            <person name="Green R.E."/>
            <person name="Gustincich S."/>
            <person name="Harbers M."/>
            <person name="Hayashi Y."/>
            <person name="Hensch T.K."/>
            <person name="Hirokawa N."/>
            <person name="Hill D."/>
            <person name="Huminiecki L."/>
            <person name="Iacono M."/>
            <person name="Ikeo K."/>
            <person name="Iwama A."/>
            <person name="Ishikawa T."/>
            <person name="Jakt M."/>
            <person name="Kanapin A."/>
            <person name="Katoh M."/>
            <person name="Kawasawa Y."/>
            <person name="Kelso J."/>
            <person name="Kitamura H."/>
            <person name="Kitano H."/>
            <person name="Kollias G."/>
            <person name="Krishnan S.P."/>
            <person name="Kruger A."/>
            <person name="Kummerfeld S.K."/>
            <person name="Kurochkin I.V."/>
            <person name="Lareau L.F."/>
            <person name="Lazarevic D."/>
            <person name="Lipovich L."/>
            <person name="Liu J."/>
            <person name="Liuni S."/>
            <person name="McWilliam S."/>
            <person name="Madan Babu M."/>
            <person name="Madera M."/>
            <person name="Marchionni L."/>
            <person name="Matsuda H."/>
            <person name="Matsuzawa S."/>
            <person name="Miki H."/>
            <person name="Mignone F."/>
            <person name="Miyake S."/>
            <person name="Morris K."/>
            <person name="Mottagui-Tabar S."/>
            <person name="Mulder N."/>
            <person name="Nakano N."/>
            <person name="Nakauchi H."/>
            <person name="Ng P."/>
            <person name="Nilsson R."/>
            <person name="Nishiguchi S."/>
            <person name="Nishikawa S."/>
            <person name="Nori F."/>
            <person name="Ohara O."/>
            <person name="Okazaki Y."/>
            <person name="Orlando V."/>
            <person name="Pang K.C."/>
            <person name="Pavan W.J."/>
            <person name="Pavesi G."/>
            <person name="Pesole G."/>
            <person name="Petrovsky N."/>
            <person name="Piazza S."/>
            <person name="Reed J."/>
            <person name="Reid J.F."/>
            <person name="Ring B.Z."/>
            <person name="Ringwald M."/>
            <person name="Rost B."/>
            <person name="Ruan Y."/>
            <person name="Salzberg S.L."/>
            <person name="Sandelin A."/>
            <person name="Schneider C."/>
            <person name="Schoenbach C."/>
            <person name="Sekiguchi K."/>
            <person name="Semple C.A."/>
            <person name="Seno S."/>
            <person name="Sessa L."/>
            <person name="Sheng Y."/>
            <person name="Shibata Y."/>
            <person name="Shimada H."/>
            <person name="Shimada K."/>
            <person name="Silva D."/>
            <person name="Sinclair B."/>
            <person name="Sperling S."/>
            <person name="Stupka E."/>
            <person name="Sugiura K."/>
            <person name="Sultana R."/>
            <person name="Takenaka Y."/>
            <person name="Taki K."/>
            <person name="Tammoja K."/>
            <person name="Tan S.L."/>
            <person name="Tang S."/>
            <person name="Taylor M.S."/>
            <person name="Tegner J."/>
            <person name="Teichmann S.A."/>
            <person name="Ueda H.R."/>
            <person name="van Nimwegen E."/>
            <person name="Verardo R."/>
            <person name="Wei C.L."/>
            <person name="Yagi K."/>
            <person name="Yamanishi H."/>
            <person name="Zabarovsky E."/>
            <person name="Zhu S."/>
            <person name="Zimmer A."/>
            <person name="Hide W."/>
            <person name="Bult C."/>
            <person name="Grimmond S.M."/>
            <person name="Teasdale R.D."/>
            <person name="Liu E.T."/>
            <person name="Brusic V."/>
            <person name="Quackenbush J."/>
            <person name="Wahlestedt C."/>
            <person name="Mattick J.S."/>
            <person name="Hume D.A."/>
            <person name="Kai C."/>
            <person name="Sasaki D."/>
            <person name="Tomaru Y."/>
            <person name="Fukuda S."/>
            <person name="Kanamori-Katayama M."/>
            <person name="Suzuki M."/>
            <person name="Aoki J."/>
            <person name="Arakawa T."/>
            <person name="Iida J."/>
            <person name="Imamura K."/>
            <person name="Itoh M."/>
            <person name="Kato T."/>
            <person name="Kawaji H."/>
            <person name="Kawagashira N."/>
            <person name="Kawashima T."/>
            <person name="Kojima M."/>
            <person name="Kondo S."/>
            <person name="Konno H."/>
            <person name="Nakano K."/>
            <person name="Ninomiya N."/>
            <person name="Nishio T."/>
            <person name="Okada M."/>
            <person name="Plessy C."/>
            <person name="Shibata K."/>
            <person name="Shiraki T."/>
            <person name="Suzuki S."/>
            <person name="Tagami M."/>
            <person name="Waki K."/>
            <person name="Watahiki A."/>
            <person name="Okamura-Oho Y."/>
            <person name="Suzuki H."/>
            <person name="Kawai J."/>
            <person name="Hayashizaki Y."/>
        </authorList>
    </citation>
    <scope>NUCLEOTIDE SEQUENCE [LARGE SCALE MRNA]</scope>
    <source>
        <strain>C57BL/6J</strain>
        <tissue>Extraembryonic tissue</tissue>
        <tissue>Placenta</tissue>
        <tissue>Stomach</tissue>
    </source>
</reference>
<reference key="3">
    <citation type="journal article" date="2004" name="Genome Res.">
        <title>The status, quality, and expansion of the NIH full-length cDNA project: the Mammalian Gene Collection (MGC).</title>
        <authorList>
            <consortium name="The MGC Project Team"/>
        </authorList>
    </citation>
    <scope>NUCLEOTIDE SEQUENCE [LARGE SCALE MRNA]</scope>
    <source>
        <strain>FVB/N</strain>
        <tissue>Mammary gland</tissue>
    </source>
</reference>
<reference key="4">
    <citation type="journal article" date="2010" name="Cell">
        <title>A tissue-specific atlas of mouse protein phosphorylation and expression.</title>
        <authorList>
            <person name="Huttlin E.L."/>
            <person name="Jedrychowski M.P."/>
            <person name="Elias J.E."/>
            <person name="Goswami T."/>
            <person name="Rad R."/>
            <person name="Beausoleil S.A."/>
            <person name="Villen J."/>
            <person name="Haas W."/>
            <person name="Sowa M.E."/>
            <person name="Gygi S.P."/>
        </authorList>
    </citation>
    <scope>IDENTIFICATION BY MASS SPECTROMETRY [LARGE SCALE ANALYSIS]</scope>
    <source>
        <tissue>Kidney</tissue>
        <tissue>Liver</tissue>
        <tissue>Lung</tissue>
        <tissue>Spleen</tissue>
        <tissue>Testis</tissue>
    </source>
</reference>
<reference evidence="10" key="5">
    <citation type="journal article" date="2018" name="Proc. Natl. Acad. Sci. U.S.A.">
        <title>Molecular mechanism of activation of the immunoregulatory amidase NAAA.</title>
        <authorList>
            <person name="Gorelik A."/>
            <person name="Gebai A."/>
            <person name="Illes K."/>
            <person name="Piomelli D."/>
            <person name="Nagar B."/>
        </authorList>
    </citation>
    <scope>X-RAY CRYSTALLOGRAPHY (1.85 ANGSTROMS) OF 31-126 AND 127-358 OF MUTANT SER-112/SER-338</scope>
    <scope>SUBUNIT</scope>
    <scope>PROTEOLYTIC CLEAVAGE</scope>
    <scope>GLYCOSYLATION AT ASN-42 AND ASN-314</scope>
    <scope>MUTAGENESIS OF ASN-112 AND ASN-338</scope>
</reference>